<organism>
    <name type="scientific">Varicella-zoster virus (strain Dumas)</name>
    <name type="common">HHV-3</name>
    <name type="synonym">Human herpesvirus 3</name>
    <dbReference type="NCBI Taxonomy" id="10338"/>
    <lineage>
        <taxon>Viruses</taxon>
        <taxon>Duplodnaviria</taxon>
        <taxon>Heunggongvirae</taxon>
        <taxon>Peploviricota</taxon>
        <taxon>Herviviricetes</taxon>
        <taxon>Herpesvirales</taxon>
        <taxon>Orthoherpesviridae</taxon>
        <taxon>Alphaherpesvirinae</taxon>
        <taxon>Varicellovirus</taxon>
        <taxon>Varicellovirus humanalpha3</taxon>
        <taxon>Human herpesvirus 3</taxon>
    </lineage>
</organism>
<reference key="1">
    <citation type="journal article" date="1986" name="J. Gen. Virol.">
        <title>The complete DNA sequence of varicella-zoster virus.</title>
        <authorList>
            <person name="Davison A.J."/>
            <person name="Scott J.E."/>
        </authorList>
    </citation>
    <scope>NUCLEOTIDE SEQUENCE [LARGE SCALE GENOMIC DNA]</scope>
</reference>
<accession>P09307</accession>
<organismHost>
    <name type="scientific">Homo sapiens</name>
    <name type="common">Human</name>
    <dbReference type="NCBI Taxonomy" id="9606"/>
</organismHost>
<dbReference type="EC" id="3.2.2.27" evidence="1"/>
<dbReference type="EMBL" id="X04370">
    <property type="protein sequence ID" value="CAA27942.1"/>
    <property type="molecule type" value="Genomic_DNA"/>
</dbReference>
<dbReference type="PIR" id="G27215">
    <property type="entry name" value="DGBE59"/>
</dbReference>
<dbReference type="SMR" id="P09307"/>
<dbReference type="Proteomes" id="UP000002602">
    <property type="component" value="Genome"/>
</dbReference>
<dbReference type="GO" id="GO:0042025">
    <property type="term" value="C:host cell nucleus"/>
    <property type="evidence" value="ECO:0007669"/>
    <property type="project" value="UniProtKB-SubCell"/>
</dbReference>
<dbReference type="GO" id="GO:0004844">
    <property type="term" value="F:uracil DNA N-glycosylase activity"/>
    <property type="evidence" value="ECO:0007669"/>
    <property type="project" value="UniProtKB-EC"/>
</dbReference>
<dbReference type="GO" id="GO:0097510">
    <property type="term" value="P:base-excision repair, AP site formation via deaminated base removal"/>
    <property type="evidence" value="ECO:0007669"/>
    <property type="project" value="TreeGrafter"/>
</dbReference>
<dbReference type="CDD" id="cd10027">
    <property type="entry name" value="UDG-F1-like"/>
    <property type="match status" value="1"/>
</dbReference>
<dbReference type="Gene3D" id="3.40.470.10">
    <property type="entry name" value="Uracil-DNA glycosylase-like domain"/>
    <property type="match status" value="1"/>
</dbReference>
<dbReference type="HAMAP" id="MF_00148">
    <property type="entry name" value="UDG"/>
    <property type="match status" value="1"/>
</dbReference>
<dbReference type="InterPro" id="IPR002043">
    <property type="entry name" value="UDG_fam1"/>
</dbReference>
<dbReference type="InterPro" id="IPR018085">
    <property type="entry name" value="Ura-DNA_Glyclase_AS"/>
</dbReference>
<dbReference type="InterPro" id="IPR005122">
    <property type="entry name" value="Uracil-DNA_glycosylase-like"/>
</dbReference>
<dbReference type="InterPro" id="IPR036895">
    <property type="entry name" value="Uracil-DNA_glycosylase-like_sf"/>
</dbReference>
<dbReference type="NCBIfam" id="NF003588">
    <property type="entry name" value="PRK05254.1-1"/>
    <property type="match status" value="1"/>
</dbReference>
<dbReference type="NCBIfam" id="NF003589">
    <property type="entry name" value="PRK05254.1-2"/>
    <property type="match status" value="1"/>
</dbReference>
<dbReference type="NCBIfam" id="NF003592">
    <property type="entry name" value="PRK05254.1-5"/>
    <property type="match status" value="1"/>
</dbReference>
<dbReference type="NCBIfam" id="TIGR00628">
    <property type="entry name" value="ung"/>
    <property type="match status" value="1"/>
</dbReference>
<dbReference type="PANTHER" id="PTHR11264">
    <property type="entry name" value="URACIL-DNA GLYCOSYLASE"/>
    <property type="match status" value="1"/>
</dbReference>
<dbReference type="PANTHER" id="PTHR11264:SF0">
    <property type="entry name" value="URACIL-DNA GLYCOSYLASE"/>
    <property type="match status" value="1"/>
</dbReference>
<dbReference type="Pfam" id="PF03167">
    <property type="entry name" value="UDG"/>
    <property type="match status" value="1"/>
</dbReference>
<dbReference type="SMART" id="SM00986">
    <property type="entry name" value="UDG"/>
    <property type="match status" value="1"/>
</dbReference>
<dbReference type="SMART" id="SM00987">
    <property type="entry name" value="UreE_C"/>
    <property type="match status" value="1"/>
</dbReference>
<dbReference type="SUPFAM" id="SSF52141">
    <property type="entry name" value="Uracil-DNA glycosylase-like"/>
    <property type="match status" value="1"/>
</dbReference>
<dbReference type="PROSITE" id="PS00130">
    <property type="entry name" value="U_DNA_GLYCOSYLASE"/>
    <property type="match status" value="1"/>
</dbReference>
<feature type="chain" id="PRO_0000176197" description="Uracil-DNA glycosylase">
    <location>
        <begin position="1"/>
        <end position="305"/>
    </location>
</feature>
<feature type="active site" description="Proton acceptor" evidence="1">
    <location>
        <position position="148"/>
    </location>
</feature>
<gene>
    <name type="ORF">ORF59</name>
</gene>
<comment type="function">
    <text evidence="1">Excises uracil residues from the DNA which can arise as a result of misincorporation of dUMP residues by DNA polymerase or deamination of cytosines. Therefore may reduce deleterious uracil incorporation into the viral genome, particularly in terminally differentiated cells which lack DNA repair enzymes.</text>
</comment>
<comment type="catalytic activity">
    <reaction evidence="1">
        <text>Hydrolyzes single-stranded DNA or mismatched double-stranded DNA and polynucleotides, releasing free uracil.</text>
        <dbReference type="EC" id="3.2.2.27"/>
    </reaction>
</comment>
<comment type="subcellular location">
    <subcellularLocation>
        <location evidence="1">Host nucleus</location>
    </subcellularLocation>
</comment>
<comment type="similarity">
    <text evidence="1">Belongs to the uracil-DNA glycosylase (UDG) superfamily. UNG family.</text>
</comment>
<proteinExistence type="inferred from homology"/>
<evidence type="ECO:0000255" key="1">
    <source>
        <dbReference type="HAMAP-Rule" id="MF_04046"/>
    </source>
</evidence>
<sequence>MDVSGEPTVCSNAYANEMKLSDSKDIYVLAHPVTKKTRKRPRGLPLGVKLDPPTFKLNNMSHHYDTETFTPVSSQLDSVEVFSKFNISPEWYDLLSDELKEPYAKGIFLEYNRLLNSGEEILPSTGDIFAWTRFCGPQSIRVVIIGQDPYPTAGHAHGLAFSVKRGITPPSSLKNIFAALMESYPNMTPPTHGCLESWARQGVLLLNTTLTVRRGTPGSHVYLGWGRLVQRVLQRLCENRTGLVFMLWGAHAQKTTQPNSRCHLVLTHAHPSPLSRVPFRNCRHFVQANEYFTRKGEPEIDWSVI</sequence>
<keyword id="KW-0227">DNA damage</keyword>
<keyword id="KW-0234">DNA repair</keyword>
<keyword id="KW-1048">Host nucleus</keyword>
<keyword id="KW-0378">Hydrolase</keyword>
<keyword id="KW-1185">Reference proteome</keyword>
<name>UNG_VZVD</name>
<protein>
    <recommendedName>
        <fullName evidence="1">Uracil-DNA glycosylase</fullName>
        <shortName evidence="1">UDG</shortName>
        <ecNumber evidence="1">3.2.2.27</ecNumber>
    </recommendedName>
    <alternativeName>
        <fullName evidence="1">UNG</fullName>
    </alternativeName>
</protein>